<evidence type="ECO:0000255" key="1">
    <source>
        <dbReference type="HAMAP-Rule" id="MF_01635"/>
    </source>
</evidence>
<evidence type="ECO:0000305" key="2"/>
<name>UBIA_BURP1</name>
<organism>
    <name type="scientific">Burkholderia pseudomallei (strain 1710b)</name>
    <dbReference type="NCBI Taxonomy" id="320372"/>
    <lineage>
        <taxon>Bacteria</taxon>
        <taxon>Pseudomonadati</taxon>
        <taxon>Pseudomonadota</taxon>
        <taxon>Betaproteobacteria</taxon>
        <taxon>Burkholderiales</taxon>
        <taxon>Burkholderiaceae</taxon>
        <taxon>Burkholderia</taxon>
        <taxon>pseudomallei group</taxon>
    </lineage>
</organism>
<protein>
    <recommendedName>
        <fullName evidence="1">4-hydroxybenzoate octaprenyltransferase</fullName>
        <ecNumber evidence="1">2.5.1.39</ecNumber>
    </recommendedName>
    <alternativeName>
        <fullName evidence="1">4-HB polyprenyltransferase</fullName>
    </alternativeName>
</protein>
<dbReference type="EC" id="2.5.1.39" evidence="1"/>
<dbReference type="EMBL" id="CP000124">
    <property type="protein sequence ID" value="ABA47892.1"/>
    <property type="status" value="ALT_INIT"/>
    <property type="molecule type" value="Genomic_DNA"/>
</dbReference>
<dbReference type="RefSeq" id="WP_004194359.1">
    <property type="nucleotide sequence ID" value="NC_007434.1"/>
</dbReference>
<dbReference type="SMR" id="Q3JNX1"/>
<dbReference type="EnsemblBacteria" id="ABA47892">
    <property type="protein sequence ID" value="ABA47892"/>
    <property type="gene ID" value="BURPS1710b_3361"/>
</dbReference>
<dbReference type="GeneID" id="92980092"/>
<dbReference type="KEGG" id="bpm:BURPS1710b_3361"/>
<dbReference type="HOGENOM" id="CLU_034879_0_2_4"/>
<dbReference type="UniPathway" id="UPA00232"/>
<dbReference type="Proteomes" id="UP000002700">
    <property type="component" value="Chromosome I"/>
</dbReference>
<dbReference type="GO" id="GO:0005886">
    <property type="term" value="C:plasma membrane"/>
    <property type="evidence" value="ECO:0007669"/>
    <property type="project" value="UniProtKB-SubCell"/>
</dbReference>
<dbReference type="GO" id="GO:0008412">
    <property type="term" value="F:4-hydroxybenzoate polyprenyltransferase activity"/>
    <property type="evidence" value="ECO:0007669"/>
    <property type="project" value="UniProtKB-UniRule"/>
</dbReference>
<dbReference type="GO" id="GO:0006744">
    <property type="term" value="P:ubiquinone biosynthetic process"/>
    <property type="evidence" value="ECO:0007669"/>
    <property type="project" value="UniProtKB-UniRule"/>
</dbReference>
<dbReference type="CDD" id="cd13959">
    <property type="entry name" value="PT_UbiA_COQ2"/>
    <property type="match status" value="1"/>
</dbReference>
<dbReference type="FunFam" id="1.10.357.140:FF:000002">
    <property type="entry name" value="4-hydroxybenzoate octaprenyltransferase"/>
    <property type="match status" value="1"/>
</dbReference>
<dbReference type="FunFam" id="1.20.120.1780:FF:000001">
    <property type="entry name" value="4-hydroxybenzoate octaprenyltransferase"/>
    <property type="match status" value="1"/>
</dbReference>
<dbReference type="Gene3D" id="1.10.357.140">
    <property type="entry name" value="UbiA prenyltransferase"/>
    <property type="match status" value="1"/>
</dbReference>
<dbReference type="Gene3D" id="1.20.120.1780">
    <property type="entry name" value="UbiA prenyltransferase"/>
    <property type="match status" value="1"/>
</dbReference>
<dbReference type="HAMAP" id="MF_01635">
    <property type="entry name" value="UbiA"/>
    <property type="match status" value="1"/>
</dbReference>
<dbReference type="InterPro" id="IPR006370">
    <property type="entry name" value="HB_polyprenyltransferase-like"/>
</dbReference>
<dbReference type="InterPro" id="IPR039653">
    <property type="entry name" value="Prenyltransferase"/>
</dbReference>
<dbReference type="InterPro" id="IPR000537">
    <property type="entry name" value="UbiA_prenyltransferase"/>
</dbReference>
<dbReference type="InterPro" id="IPR030470">
    <property type="entry name" value="UbiA_prenylTrfase_CS"/>
</dbReference>
<dbReference type="InterPro" id="IPR044878">
    <property type="entry name" value="UbiA_sf"/>
</dbReference>
<dbReference type="NCBIfam" id="TIGR01474">
    <property type="entry name" value="ubiA_proteo"/>
    <property type="match status" value="1"/>
</dbReference>
<dbReference type="PANTHER" id="PTHR11048:SF28">
    <property type="entry name" value="4-HYDROXYBENZOATE POLYPRENYLTRANSFERASE, MITOCHONDRIAL"/>
    <property type="match status" value="1"/>
</dbReference>
<dbReference type="PANTHER" id="PTHR11048">
    <property type="entry name" value="PRENYLTRANSFERASES"/>
    <property type="match status" value="1"/>
</dbReference>
<dbReference type="Pfam" id="PF01040">
    <property type="entry name" value="UbiA"/>
    <property type="match status" value="1"/>
</dbReference>
<dbReference type="PROSITE" id="PS00943">
    <property type="entry name" value="UBIA"/>
    <property type="match status" value="1"/>
</dbReference>
<feature type="chain" id="PRO_0000262784" description="4-hydroxybenzoate octaprenyltransferase">
    <location>
        <begin position="1"/>
        <end position="287"/>
    </location>
</feature>
<feature type="transmembrane region" description="Helical" evidence="1">
    <location>
        <begin position="30"/>
        <end position="50"/>
    </location>
</feature>
<feature type="transmembrane region" description="Helical" evidence="1">
    <location>
        <begin position="92"/>
        <end position="112"/>
    </location>
</feature>
<feature type="transmembrane region" description="Helical" evidence="1">
    <location>
        <begin position="133"/>
        <end position="153"/>
    </location>
</feature>
<feature type="transmembrane region" description="Helical" evidence="1">
    <location>
        <begin position="158"/>
        <end position="178"/>
    </location>
</feature>
<feature type="transmembrane region" description="Helical" evidence="1">
    <location>
        <begin position="207"/>
        <end position="227"/>
    </location>
</feature>
<feature type="transmembrane region" description="Helical" evidence="1">
    <location>
        <begin position="232"/>
        <end position="252"/>
    </location>
</feature>
<feature type="transmembrane region" description="Helical" evidence="1">
    <location>
        <begin position="266"/>
        <end position="286"/>
    </location>
</feature>
<gene>
    <name evidence="1" type="primary">ubiA</name>
    <name type="ordered locus">BURPS1710b_3361</name>
</gene>
<accession>Q3JNX1</accession>
<reference key="1">
    <citation type="journal article" date="2010" name="Genome Biol. Evol.">
        <title>Continuing evolution of Burkholderia mallei through genome reduction and large-scale rearrangements.</title>
        <authorList>
            <person name="Losada L."/>
            <person name="Ronning C.M."/>
            <person name="DeShazer D."/>
            <person name="Woods D."/>
            <person name="Fedorova N."/>
            <person name="Kim H.S."/>
            <person name="Shabalina S.A."/>
            <person name="Pearson T.R."/>
            <person name="Brinkac L."/>
            <person name="Tan P."/>
            <person name="Nandi T."/>
            <person name="Crabtree J."/>
            <person name="Badger J."/>
            <person name="Beckstrom-Sternberg S."/>
            <person name="Saqib M."/>
            <person name="Schutzer S.E."/>
            <person name="Keim P."/>
            <person name="Nierman W.C."/>
        </authorList>
    </citation>
    <scope>NUCLEOTIDE SEQUENCE [LARGE SCALE GENOMIC DNA]</scope>
    <source>
        <strain>1710b</strain>
    </source>
</reference>
<keyword id="KW-0997">Cell inner membrane</keyword>
<keyword id="KW-1003">Cell membrane</keyword>
<keyword id="KW-0460">Magnesium</keyword>
<keyword id="KW-0472">Membrane</keyword>
<keyword id="KW-0808">Transferase</keyword>
<keyword id="KW-0812">Transmembrane</keyword>
<keyword id="KW-1133">Transmembrane helix</keyword>
<keyword id="KW-0831">Ubiquinone biosynthesis</keyword>
<proteinExistence type="inferred from homology"/>
<comment type="function">
    <text evidence="1">Catalyzes the prenylation of para-hydroxybenzoate (PHB) with an all-trans polyprenyl group. Mediates the second step in the final reaction sequence of ubiquinone-8 (UQ-8) biosynthesis, which is the condensation of the polyisoprenoid side chain with PHB, generating the first membrane-bound Q intermediate 3-octaprenyl-4-hydroxybenzoate.</text>
</comment>
<comment type="catalytic activity">
    <reaction evidence="1">
        <text>all-trans-octaprenyl diphosphate + 4-hydroxybenzoate = 4-hydroxy-3-(all-trans-octaprenyl)benzoate + diphosphate</text>
        <dbReference type="Rhea" id="RHEA:27782"/>
        <dbReference type="ChEBI" id="CHEBI:1617"/>
        <dbReference type="ChEBI" id="CHEBI:17879"/>
        <dbReference type="ChEBI" id="CHEBI:33019"/>
        <dbReference type="ChEBI" id="CHEBI:57711"/>
        <dbReference type="EC" id="2.5.1.39"/>
    </reaction>
</comment>
<comment type="cofactor">
    <cofactor evidence="1">
        <name>Mg(2+)</name>
        <dbReference type="ChEBI" id="CHEBI:18420"/>
    </cofactor>
</comment>
<comment type="pathway">
    <text evidence="1">Cofactor biosynthesis; ubiquinone biosynthesis.</text>
</comment>
<comment type="subcellular location">
    <subcellularLocation>
        <location evidence="1">Cell inner membrane</location>
        <topology evidence="1">Multi-pass membrane protein</topology>
    </subcellularLocation>
</comment>
<comment type="similarity">
    <text evidence="1">Belongs to the UbiA prenyltransferase family.</text>
</comment>
<comment type="sequence caution" evidence="2">
    <conflict type="erroneous initiation">
        <sequence resource="EMBL-CDS" id="ABA47892"/>
    </conflict>
</comment>
<sequence>MLARFPLYLRLIRMDKPIGSLLLLWPTLNALWIASDGHPAPSLVVIFALGTLLMRSAGCAINDYADRDFDRHVKRTAERPLTSGKIRAWEAIAIAVGLALVSFLLILPLNGLTKELSVVAVFVAATYPFMKRFFAIPQAYLGIAFGFGIPMAFAAVQDTVPMIAWAMLAANVFWSVAYDTAYAMVDRDDDLKIGMRTSAITFGRHDVLAIMLCYAAMLGIYVWLGAALHFGWPYWAGWAAAAGCSIYHYTLIKDRERMACFAAFRHNNWLGGVLFAGIAAHYALAVR</sequence>